<reference key="1">
    <citation type="journal article" date="2005" name="BMC Genomics">
        <title>Characterization of 954 bovine full-CDS cDNA sequences.</title>
        <authorList>
            <person name="Harhay G.P."/>
            <person name="Sonstegard T.S."/>
            <person name="Keele J.W."/>
            <person name="Heaton M.P."/>
            <person name="Clawson M.L."/>
            <person name="Snelling W.M."/>
            <person name="Wiedmann R.T."/>
            <person name="Van Tassell C.P."/>
            <person name="Smith T.P.L."/>
        </authorList>
    </citation>
    <scope>NUCLEOTIDE SEQUENCE [LARGE SCALE MRNA]</scope>
</reference>
<reference key="2">
    <citation type="submission" date="2006-06" db="EMBL/GenBank/DDBJ databases">
        <authorList>
            <consortium name="NIH - Mammalian Gene Collection (MGC) project"/>
        </authorList>
    </citation>
    <scope>NUCLEOTIDE SEQUENCE [LARGE SCALE MRNA]</scope>
    <source>
        <strain>Hereford</strain>
        <tissue>Fetal skin</tissue>
    </source>
</reference>
<proteinExistence type="evidence at protein level"/>
<accession>Q5E9J8</accession>
<accession>Q17QK2</accession>
<comment type="function">
    <text evidence="2 3">Chaperone that specifically binds and folds nascent G alpha proteins prior to G protein heterotrimer formation, promoting their stability and activity: folds GNAI1, GNAO1, GNA13 and GNAQ. Does not fold G(s) G-alpha proteins GNAS nor GNAL. Also acts as a guanine nucleotide exchange factor (GEF) for G alpha proteins by stimulating exchange of bound GDP for free GTP. Involved in regulation of microtubule pulling forces during mitotic movement of chromosomes by stimulating G(i)-alpha protein (GNAI1), possibly leading to release G(i)-alpha-GTP and NuMA proteins from the NuMA-GPSM2-G(i)-alpha-GDP complex (By similarity). Also acts as an activator for G(q)-alpha (GNAQ) protein by enhancing the G(q)-coupled receptor-mediated ERK activation (By similarity).</text>
</comment>
<comment type="subunit">
    <text evidence="2 3">Interacts with GDP-bound G alpha proteins GNAI1, GNAO1 and GNAQ, and with GNA13 with lower affinity. Does not interact with G-alpha proteins when they are in complex with subunits beta and gamma. Interacts (via C-terminus) with RGS14; the interaction stimulates the dissociation of the complex between RGS14 and the active GTP-bound form of GNAI1 (By similarity). Interacts with NCS1; interaction is favored in the absence of Ca(2+) and myristoylation of NCS1 is not required (By similarity).</text>
</comment>
<comment type="subcellular location">
    <subcellularLocation>
        <location evidence="2">Cytoplasm</location>
        <location evidence="2">Cell cortex</location>
    </subcellularLocation>
    <subcellularLocation>
        <location evidence="2">Cytoplasm</location>
    </subcellularLocation>
</comment>
<comment type="PTM">
    <text evidence="2">Phosphorylated at Ser-435 and Thr-440 by CK2, stabilizing its interface with G alpha proteins.</text>
</comment>
<comment type="similarity">
    <text evidence="4">Belongs to the synembryn family.</text>
</comment>
<organism>
    <name type="scientific">Bos taurus</name>
    <name type="common">Bovine</name>
    <dbReference type="NCBI Taxonomy" id="9913"/>
    <lineage>
        <taxon>Eukaryota</taxon>
        <taxon>Metazoa</taxon>
        <taxon>Chordata</taxon>
        <taxon>Craniata</taxon>
        <taxon>Vertebrata</taxon>
        <taxon>Euteleostomi</taxon>
        <taxon>Mammalia</taxon>
        <taxon>Eutheria</taxon>
        <taxon>Laurasiatheria</taxon>
        <taxon>Artiodactyla</taxon>
        <taxon>Ruminantia</taxon>
        <taxon>Pecora</taxon>
        <taxon>Bovidae</taxon>
        <taxon>Bovinae</taxon>
        <taxon>Bos</taxon>
    </lineage>
</organism>
<gene>
    <name type="primary">RIC8A</name>
</gene>
<name>RIC8A_BOVIN</name>
<evidence type="ECO:0000250" key="1">
    <source>
        <dbReference type="UniProtKB" id="Q3TIR3"/>
    </source>
</evidence>
<evidence type="ECO:0000250" key="2">
    <source>
        <dbReference type="UniProtKB" id="Q80ZG1"/>
    </source>
</evidence>
<evidence type="ECO:0000250" key="3">
    <source>
        <dbReference type="UniProtKB" id="Q9NPQ8"/>
    </source>
</evidence>
<evidence type="ECO:0000305" key="4"/>
<evidence type="ECO:0007829" key="5">
    <source>
        <dbReference type="PDB" id="6N85"/>
    </source>
</evidence>
<keyword id="KW-0002">3D-structure</keyword>
<keyword id="KW-0143">Chaperone</keyword>
<keyword id="KW-0963">Cytoplasm</keyword>
<keyword id="KW-0344">Guanine-nucleotide releasing factor</keyword>
<keyword id="KW-0597">Phosphoprotein</keyword>
<keyword id="KW-1185">Reference proteome</keyword>
<protein>
    <recommendedName>
        <fullName>Chaperone Ric-8A</fullName>
    </recommendedName>
    <alternativeName>
        <fullName>Synembryn-A</fullName>
    </alternativeName>
</protein>
<dbReference type="EMBL" id="BT020922">
    <property type="protein sequence ID" value="AAX08939.1"/>
    <property type="molecule type" value="mRNA"/>
</dbReference>
<dbReference type="EMBL" id="BC118313">
    <property type="protein sequence ID" value="AAI18314.1"/>
    <property type="molecule type" value="mRNA"/>
</dbReference>
<dbReference type="RefSeq" id="NP_001015627.1">
    <property type="nucleotide sequence ID" value="NM_001015627.2"/>
</dbReference>
<dbReference type="PDB" id="6N85">
    <property type="method" value="X-ray"/>
    <property type="resolution" value="2.50 A"/>
    <property type="chains" value="B=1-492"/>
</dbReference>
<dbReference type="PDB" id="6N86">
    <property type="method" value="X-ray"/>
    <property type="resolution" value="3.90 A"/>
    <property type="chains" value="B=1-492"/>
</dbReference>
<dbReference type="PDBsum" id="6N85"/>
<dbReference type="PDBsum" id="6N86"/>
<dbReference type="SASBDB" id="Q5E9J8"/>
<dbReference type="SMR" id="Q5E9J8"/>
<dbReference type="FunCoup" id="Q5E9J8">
    <property type="interactions" value="4871"/>
</dbReference>
<dbReference type="STRING" id="9913.ENSBTAP00000002646"/>
<dbReference type="PaxDb" id="9913-ENSBTAP00000002646"/>
<dbReference type="GeneID" id="521037"/>
<dbReference type="KEGG" id="bta:521037"/>
<dbReference type="CTD" id="60626"/>
<dbReference type="VEuPathDB" id="HostDB:ENSBTAG00000002042"/>
<dbReference type="eggNOG" id="KOG4464">
    <property type="taxonomic scope" value="Eukaryota"/>
</dbReference>
<dbReference type="HOGENOM" id="CLU_018602_1_0_1"/>
<dbReference type="InParanoid" id="Q5E9J8"/>
<dbReference type="OMA" id="NADPIFT"/>
<dbReference type="OrthoDB" id="5585685at2759"/>
<dbReference type="TreeFam" id="TF314907"/>
<dbReference type="Proteomes" id="UP000009136">
    <property type="component" value="Chromosome 11"/>
</dbReference>
<dbReference type="Bgee" id="ENSBTAG00000002042">
    <property type="expression patterns" value="Expressed in myometrium and 107 other cell types or tissues"/>
</dbReference>
<dbReference type="GO" id="GO:0005938">
    <property type="term" value="C:cell cortex"/>
    <property type="evidence" value="ECO:0007669"/>
    <property type="project" value="UniProtKB-SubCell"/>
</dbReference>
<dbReference type="GO" id="GO:0005737">
    <property type="term" value="C:cytoplasm"/>
    <property type="evidence" value="ECO:0000250"/>
    <property type="project" value="UniProtKB"/>
</dbReference>
<dbReference type="GO" id="GO:0005886">
    <property type="term" value="C:plasma membrane"/>
    <property type="evidence" value="ECO:0000250"/>
    <property type="project" value="UniProtKB"/>
</dbReference>
<dbReference type="GO" id="GO:0001965">
    <property type="term" value="F:G-protein alpha-subunit binding"/>
    <property type="evidence" value="ECO:0000250"/>
    <property type="project" value="UniProtKB"/>
</dbReference>
<dbReference type="GO" id="GO:0005085">
    <property type="term" value="F:guanyl-nucleotide exchange factor activity"/>
    <property type="evidence" value="ECO:0000250"/>
    <property type="project" value="UniProtKB"/>
</dbReference>
<dbReference type="GO" id="GO:0044183">
    <property type="term" value="F:protein folding chaperone"/>
    <property type="evidence" value="ECO:0000250"/>
    <property type="project" value="UniProtKB"/>
</dbReference>
<dbReference type="GO" id="GO:0007186">
    <property type="term" value="P:G protein-coupled receptor signaling pathway"/>
    <property type="evidence" value="ECO:0000250"/>
    <property type="project" value="UniProtKB"/>
</dbReference>
<dbReference type="FunFam" id="1.25.10.10:FF:000447">
    <property type="entry name" value="RIC8 guanine nucleotide exchange factor A"/>
    <property type="match status" value="1"/>
</dbReference>
<dbReference type="Gene3D" id="1.25.10.10">
    <property type="entry name" value="Leucine-rich Repeat Variant"/>
    <property type="match status" value="1"/>
</dbReference>
<dbReference type="InterPro" id="IPR011989">
    <property type="entry name" value="ARM-like"/>
</dbReference>
<dbReference type="InterPro" id="IPR016024">
    <property type="entry name" value="ARM-type_fold"/>
</dbReference>
<dbReference type="InterPro" id="IPR008376">
    <property type="entry name" value="Chaperone_Ric-8_A/B"/>
</dbReference>
<dbReference type="InterPro" id="IPR019318">
    <property type="entry name" value="Gua_nucleotide_exch_fac_Ric8"/>
</dbReference>
<dbReference type="PANTHER" id="PTHR12425">
    <property type="entry name" value="SYNEMBRYN"/>
    <property type="match status" value="1"/>
</dbReference>
<dbReference type="PANTHER" id="PTHR12425:SF4">
    <property type="entry name" value="SYNEMBRYN-A"/>
    <property type="match status" value="1"/>
</dbReference>
<dbReference type="Pfam" id="PF10165">
    <property type="entry name" value="Ric8"/>
    <property type="match status" value="1"/>
</dbReference>
<dbReference type="PRINTS" id="PR01802">
    <property type="entry name" value="SYNEMBRYN"/>
</dbReference>
<dbReference type="SUPFAM" id="SSF48371">
    <property type="entry name" value="ARM repeat"/>
    <property type="match status" value="1"/>
</dbReference>
<sequence length="530" mass="59499">MEPRAVADALETGEEDVVMEALRAYNRENSQSFTFDDAQQEDRKRLAKLLVSVLEQGLPPSRRVIWLQSIRILSRDRSCLDSFTSRRSLQALACYAGISASQGSVPEPLNMDVVLESLKCLCNLVLSSPVAQALAAEAGLVVRLAERVGLCRQSSFPHDVQFFDLRLLFLLTALRTDVRQQLFQELQGVRLLTRALELTLGMTEGERHPELLPPQETERAMEILKVLFNITFDSIKREVDEEDAALYRHLGTLLRHCVMLAAAGDRTEELHGHAVNLLGNLPVKCLDVLLTLEPHEGSLEFLGVNMDVIRVLLSFMEKRLHQTHRLKESVAPVLSVLTECARMHRPARKFLKAQVLPPLRDVRTRPEVGELLRNKLVRLMTHLDTDVKRVAAEFLFVLCSESVPRFIKYTGYGNAAGLLAARGLMAGGRPEGQYSEDEDTDTDEYKEAKASINPVTGRVEEKPPNPMEGMTEEQKEHEAMKLVNMFDKLSRHRVIQPMGMSPRGQLTSLQDAMCETMEGQLSSDPDSDPD</sequence>
<feature type="chain" id="PRO_0000235889" description="Chaperone Ric-8A">
    <location>
        <begin position="1"/>
        <end position="530"/>
    </location>
</feature>
<feature type="modified residue" description="Phosphoserine" evidence="3">
    <location>
        <position position="435"/>
    </location>
</feature>
<feature type="modified residue" description="Phosphothreonine" evidence="3">
    <location>
        <position position="440"/>
    </location>
</feature>
<feature type="modified residue" description="Phosphothreonine" evidence="1">
    <location>
        <position position="442"/>
    </location>
</feature>
<feature type="modified residue" description="Phosphoserine" evidence="3">
    <location>
        <position position="501"/>
    </location>
</feature>
<feature type="modified residue" description="Phosphoserine" evidence="3">
    <location>
        <position position="522"/>
    </location>
</feature>
<feature type="modified residue" description="Phosphoserine" evidence="3">
    <location>
        <position position="523"/>
    </location>
</feature>
<feature type="modified residue" description="Phosphoserine" evidence="3">
    <location>
        <position position="527"/>
    </location>
</feature>
<feature type="helix" evidence="5">
    <location>
        <begin position="3"/>
        <end position="11"/>
    </location>
</feature>
<feature type="helix" evidence="5">
    <location>
        <begin position="15"/>
        <end position="28"/>
    </location>
</feature>
<feature type="turn" evidence="5">
    <location>
        <begin position="29"/>
        <end position="31"/>
    </location>
</feature>
<feature type="helix" evidence="5">
    <location>
        <begin position="40"/>
        <end position="56"/>
    </location>
</feature>
<feature type="helix" evidence="5">
    <location>
        <begin position="60"/>
        <end position="62"/>
    </location>
</feature>
<feature type="helix" evidence="5">
    <location>
        <begin position="63"/>
        <end position="73"/>
    </location>
</feature>
<feature type="helix" evidence="5">
    <location>
        <begin position="77"/>
        <end position="83"/>
    </location>
</feature>
<feature type="helix" evidence="5">
    <location>
        <begin position="86"/>
        <end position="95"/>
    </location>
</feature>
<feature type="helix" evidence="5">
    <location>
        <begin position="111"/>
        <end position="127"/>
    </location>
</feature>
<feature type="helix" evidence="5">
    <location>
        <begin position="129"/>
        <end position="138"/>
    </location>
</feature>
<feature type="helix" evidence="5">
    <location>
        <begin position="141"/>
        <end position="148"/>
    </location>
</feature>
<feature type="helix" evidence="5">
    <location>
        <begin position="149"/>
        <end position="153"/>
    </location>
</feature>
<feature type="helix" evidence="5">
    <location>
        <begin position="158"/>
        <end position="174"/>
    </location>
</feature>
<feature type="helix" evidence="5">
    <location>
        <begin position="176"/>
        <end position="183"/>
    </location>
</feature>
<feature type="turn" evidence="5">
    <location>
        <begin position="184"/>
        <end position="186"/>
    </location>
</feature>
<feature type="helix" evidence="5">
    <location>
        <begin position="188"/>
        <end position="200"/>
    </location>
</feature>
<feature type="strand" evidence="5">
    <location>
        <begin position="210"/>
        <end position="212"/>
    </location>
</feature>
<feature type="helix" evidence="5">
    <location>
        <begin position="214"/>
        <end position="231"/>
    </location>
</feature>
<feature type="turn" evidence="5">
    <location>
        <begin position="232"/>
        <end position="234"/>
    </location>
</feature>
<feature type="helix" evidence="5">
    <location>
        <begin position="241"/>
        <end position="259"/>
    </location>
</feature>
<feature type="turn" evidence="5">
    <location>
        <begin position="263"/>
        <end position="266"/>
    </location>
</feature>
<feature type="helix" evidence="5">
    <location>
        <begin position="267"/>
        <end position="278"/>
    </location>
</feature>
<feature type="helix" evidence="5">
    <location>
        <begin position="283"/>
        <end position="289"/>
    </location>
</feature>
<feature type="helix" evidence="5">
    <location>
        <begin position="307"/>
        <end position="319"/>
    </location>
</feature>
<feature type="helix" evidence="5">
    <location>
        <begin position="326"/>
        <end position="343"/>
    </location>
</feature>
<feature type="helix" evidence="5">
    <location>
        <begin position="345"/>
        <end position="355"/>
    </location>
</feature>
<feature type="strand" evidence="5">
    <location>
        <begin position="368"/>
        <end position="371"/>
    </location>
</feature>
<feature type="helix" evidence="5">
    <location>
        <begin position="372"/>
        <end position="378"/>
    </location>
</feature>
<feature type="helix" evidence="5">
    <location>
        <begin position="379"/>
        <end position="381"/>
    </location>
</feature>
<feature type="helix" evidence="5">
    <location>
        <begin position="385"/>
        <end position="398"/>
    </location>
</feature>
<feature type="turn" evidence="5">
    <location>
        <begin position="399"/>
        <end position="401"/>
    </location>
</feature>
<feature type="helix" evidence="5">
    <location>
        <begin position="403"/>
        <end position="410"/>
    </location>
</feature>
<feature type="helix" evidence="5">
    <location>
        <begin position="412"/>
        <end position="421"/>
    </location>
</feature>